<comment type="function">
    <text evidence="1">Involved in the regulation of endocytosis and in several stages of intracellular trafficking. Plays a role in recycling endocytosed transferrin receptor and prevent its degradation. Involved in autophagosome assembly by regulating trafficking and recycling of phospholipid scramblase ATG9A.</text>
</comment>
<comment type="subunit">
    <text evidence="1 7">Heterodimer; heterodimerizes with SNX7 or SNX30 (By similarity). Interacts with WWC1/KIBRA (By similarity). Identified in a complex with WWC1/KIBRA and dynein components DYNLL1 and DYNC1I2 (By similarity). Interacts with BIN1 (PubMed:12668730).</text>
</comment>
<comment type="subcellular location">
    <subcellularLocation>
        <location evidence="1">Early endosome</location>
    </subcellularLocation>
    <subcellularLocation>
        <location evidence="1">Early endosome membrane</location>
        <topology evidence="1">Peripheral membrane protein</topology>
        <orientation evidence="1">Cytoplasmic side</orientation>
    </subcellularLocation>
    <text evidence="1">Also detected on a juxtanuclear endocytic recycling compartment (ERC).</text>
</comment>
<comment type="domain">
    <text evidence="4">The PX domain binds phosphatidylinositol 3-phosphate which is necessary for peripheral membrane localization.</text>
</comment>
<comment type="similarity">
    <text evidence="9">Belongs to the sorting nexin family.</text>
</comment>
<sequence>MEQAPPDPEKLLQPGPLEPLGGPGAVLEAAVGEENEGTREDGSGVDTMTGNNFWLKKIEISVSEAEKRTGRNAVNMQETYTAYLIETRSVEHADGQSVLTDSLWRRYSEFELLRNYLLVYYPHVVVPPLPEKRAEFVWHKLSADNMDPDFVERRRVGLENFLLRVASHPVLCRDKIFYSFLTQEGNWKETVNETGFQLKADSRLKALNATFRVKNPDKRFTELRHYSDELQSVISHLLRVRARVADRLYGVYKVHGNYGRVFSEWSAIEKEMGDGLQSAGHHMDVYASSIDDILEDEEHYADQLKEYLFYAEALRAVCRKHELMQYDLETAAQDLAAKKQQCEELATGTVRTFSLKGMTTKLFGQETPEQREARIKVLEEQINEGEQQLKSKNLEGREFVKNAWADIERFKEQKNRDLKEALISYAVMQISMCKKGIQVWTNAKECFSKM</sequence>
<accession>Q91YJ2</accession>
<dbReference type="EMBL" id="AK135356">
    <property type="protein sequence ID" value="BAE22501.1"/>
    <property type="molecule type" value="mRNA"/>
</dbReference>
<dbReference type="EMBL" id="BC016599">
    <property type="protein sequence ID" value="AAH16599.1"/>
    <property type="molecule type" value="mRNA"/>
</dbReference>
<dbReference type="CCDS" id="CCDS28129.1"/>
<dbReference type="RefSeq" id="NP_542124.1">
    <property type="nucleotide sequence ID" value="NM_080557.2"/>
</dbReference>
<dbReference type="SMR" id="Q91YJ2"/>
<dbReference type="BioGRID" id="213257">
    <property type="interactions" value="16"/>
</dbReference>
<dbReference type="FunCoup" id="Q91YJ2">
    <property type="interactions" value="2215"/>
</dbReference>
<dbReference type="STRING" id="10090.ENSMUSP00000023502"/>
<dbReference type="GlyGen" id="Q91YJ2">
    <property type="glycosylation" value="1 site, 1 N-linked glycan (1 site)"/>
</dbReference>
<dbReference type="iPTMnet" id="Q91YJ2"/>
<dbReference type="PhosphoSitePlus" id="Q91YJ2"/>
<dbReference type="SwissPalm" id="Q91YJ2"/>
<dbReference type="jPOST" id="Q91YJ2"/>
<dbReference type="PaxDb" id="10090-ENSMUSP00000023502"/>
<dbReference type="PeptideAtlas" id="Q91YJ2"/>
<dbReference type="ProteomicsDB" id="261304"/>
<dbReference type="Pumba" id="Q91YJ2"/>
<dbReference type="Antibodypedia" id="1370">
    <property type="antibodies" value="277 antibodies from 33 providers"/>
</dbReference>
<dbReference type="DNASU" id="69150"/>
<dbReference type="Ensembl" id="ENSMUST00000023502.6">
    <property type="protein sequence ID" value="ENSMUSP00000023502.5"/>
    <property type="gene ID" value="ENSMUSG00000022808.6"/>
</dbReference>
<dbReference type="GeneID" id="69150"/>
<dbReference type="KEGG" id="mmu:69150"/>
<dbReference type="UCSC" id="uc007yzz.1">
    <property type="organism name" value="mouse"/>
</dbReference>
<dbReference type="AGR" id="MGI:1916400"/>
<dbReference type="CTD" id="8723"/>
<dbReference type="MGI" id="MGI:1916400">
    <property type="gene designation" value="Snx4"/>
</dbReference>
<dbReference type="VEuPathDB" id="HostDB:ENSMUSG00000022808"/>
<dbReference type="eggNOG" id="KOG2273">
    <property type="taxonomic scope" value="Eukaryota"/>
</dbReference>
<dbReference type="GeneTree" id="ENSGT00930000151029"/>
<dbReference type="HOGENOM" id="CLU_057138_0_0_1"/>
<dbReference type="InParanoid" id="Q91YJ2"/>
<dbReference type="OMA" id="LQKSGHY"/>
<dbReference type="OrthoDB" id="289314at2759"/>
<dbReference type="PhylomeDB" id="Q91YJ2"/>
<dbReference type="TreeFam" id="TF328543"/>
<dbReference type="BioGRID-ORCS" id="69150">
    <property type="hits" value="3 hits in 77 CRISPR screens"/>
</dbReference>
<dbReference type="ChiTaRS" id="Snx4">
    <property type="organism name" value="mouse"/>
</dbReference>
<dbReference type="PRO" id="PR:Q91YJ2"/>
<dbReference type="Proteomes" id="UP000000589">
    <property type="component" value="Chromosome 16"/>
</dbReference>
<dbReference type="RNAct" id="Q91YJ2">
    <property type="molecule type" value="protein"/>
</dbReference>
<dbReference type="Bgee" id="ENSMUSG00000022808">
    <property type="expression patterns" value="Expressed in atrioventricular valve and 263 other cell types or tissues"/>
</dbReference>
<dbReference type="ExpressionAtlas" id="Q91YJ2">
    <property type="expression patterns" value="baseline and differential"/>
</dbReference>
<dbReference type="GO" id="GO:0005868">
    <property type="term" value="C:cytoplasmic dynein complex"/>
    <property type="evidence" value="ECO:0000250"/>
    <property type="project" value="UniProtKB"/>
</dbReference>
<dbReference type="GO" id="GO:0005769">
    <property type="term" value="C:early endosome"/>
    <property type="evidence" value="ECO:0000250"/>
    <property type="project" value="UniProtKB"/>
</dbReference>
<dbReference type="GO" id="GO:0031901">
    <property type="term" value="C:early endosome membrane"/>
    <property type="evidence" value="ECO:0000250"/>
    <property type="project" value="UniProtKB"/>
</dbReference>
<dbReference type="GO" id="GO:0005886">
    <property type="term" value="C:plasma membrane"/>
    <property type="evidence" value="ECO:0007669"/>
    <property type="project" value="Ensembl"/>
</dbReference>
<dbReference type="GO" id="GO:0098830">
    <property type="term" value="C:presynaptic endosome"/>
    <property type="evidence" value="ECO:0000314"/>
    <property type="project" value="SynGO"/>
</dbReference>
<dbReference type="GO" id="GO:0031201">
    <property type="term" value="C:SNARE complex"/>
    <property type="evidence" value="ECO:0007669"/>
    <property type="project" value="Ensembl"/>
</dbReference>
<dbReference type="GO" id="GO:0005154">
    <property type="term" value="F:epidermal growth factor receptor binding"/>
    <property type="evidence" value="ECO:0007669"/>
    <property type="project" value="Ensembl"/>
</dbReference>
<dbReference type="GO" id="GO:0005158">
    <property type="term" value="F:insulin receptor binding"/>
    <property type="evidence" value="ECO:0007669"/>
    <property type="project" value="Ensembl"/>
</dbReference>
<dbReference type="GO" id="GO:1990460">
    <property type="term" value="F:leptin receptor binding"/>
    <property type="evidence" value="ECO:0007669"/>
    <property type="project" value="Ensembl"/>
</dbReference>
<dbReference type="GO" id="GO:0035091">
    <property type="term" value="F:phosphatidylinositol binding"/>
    <property type="evidence" value="ECO:0000250"/>
    <property type="project" value="UniProtKB"/>
</dbReference>
<dbReference type="GO" id="GO:0032266">
    <property type="term" value="F:phosphatidylinositol-3-phosphate binding"/>
    <property type="evidence" value="ECO:0000250"/>
    <property type="project" value="UniProtKB"/>
</dbReference>
<dbReference type="GO" id="GO:1990459">
    <property type="term" value="F:transferrin receptor binding"/>
    <property type="evidence" value="ECO:0007669"/>
    <property type="project" value="Ensembl"/>
</dbReference>
<dbReference type="GO" id="GO:0032456">
    <property type="term" value="P:endocytic recycling"/>
    <property type="evidence" value="ECO:0000250"/>
    <property type="project" value="UniProtKB"/>
</dbReference>
<dbReference type="GO" id="GO:2000786">
    <property type="term" value="P:positive regulation of autophagosome assembly"/>
    <property type="evidence" value="ECO:0000250"/>
    <property type="project" value="UniProtKB"/>
</dbReference>
<dbReference type="GO" id="GO:1903595">
    <property type="term" value="P:positive regulation of histamine secretion by mast cell"/>
    <property type="evidence" value="ECO:0007669"/>
    <property type="project" value="Ensembl"/>
</dbReference>
<dbReference type="GO" id="GO:0015031">
    <property type="term" value="P:protein transport"/>
    <property type="evidence" value="ECO:0000250"/>
    <property type="project" value="UniProtKB"/>
</dbReference>
<dbReference type="CDD" id="cd07622">
    <property type="entry name" value="BAR_SNX4"/>
    <property type="match status" value="1"/>
</dbReference>
<dbReference type="CDD" id="cd06864">
    <property type="entry name" value="PX_SNX4"/>
    <property type="match status" value="1"/>
</dbReference>
<dbReference type="FunFam" id="1.20.1270.60:FF:000035">
    <property type="entry name" value="Sorting nexin 4"/>
    <property type="match status" value="1"/>
</dbReference>
<dbReference type="FunFam" id="3.30.1520.10:FF:000031">
    <property type="entry name" value="Sorting nexin 4"/>
    <property type="match status" value="1"/>
</dbReference>
<dbReference type="Gene3D" id="1.20.1270.60">
    <property type="entry name" value="Arfaptin homology (AH) domain/BAR domain"/>
    <property type="match status" value="1"/>
</dbReference>
<dbReference type="Gene3D" id="3.30.1520.10">
    <property type="entry name" value="Phox-like domain"/>
    <property type="match status" value="1"/>
</dbReference>
<dbReference type="InterPro" id="IPR027267">
    <property type="entry name" value="AH/BAR_dom_sf"/>
</dbReference>
<dbReference type="InterPro" id="IPR001683">
    <property type="entry name" value="PX_dom"/>
</dbReference>
<dbReference type="InterPro" id="IPR036871">
    <property type="entry name" value="PX_dom_sf"/>
</dbReference>
<dbReference type="InterPro" id="IPR034902">
    <property type="entry name" value="PX_SNX4"/>
</dbReference>
<dbReference type="InterPro" id="IPR034783">
    <property type="entry name" value="SNX4"/>
</dbReference>
<dbReference type="InterPro" id="IPR037430">
    <property type="entry name" value="SNX4_BAR"/>
</dbReference>
<dbReference type="PANTHER" id="PTHR46596">
    <property type="entry name" value="SORTING NEXIN-4"/>
    <property type="match status" value="1"/>
</dbReference>
<dbReference type="PANTHER" id="PTHR46596:SF1">
    <property type="entry name" value="SORTING NEXIN-4"/>
    <property type="match status" value="1"/>
</dbReference>
<dbReference type="Pfam" id="PF00787">
    <property type="entry name" value="PX"/>
    <property type="match status" value="1"/>
</dbReference>
<dbReference type="SMART" id="SM00312">
    <property type="entry name" value="PX"/>
    <property type="match status" value="1"/>
</dbReference>
<dbReference type="SUPFAM" id="SSF64268">
    <property type="entry name" value="PX domain"/>
    <property type="match status" value="1"/>
</dbReference>
<dbReference type="PROSITE" id="PS50195">
    <property type="entry name" value="PX"/>
    <property type="match status" value="1"/>
</dbReference>
<gene>
    <name evidence="8 10" type="primary">Snx4</name>
</gene>
<organism>
    <name type="scientific">Mus musculus</name>
    <name type="common">Mouse</name>
    <dbReference type="NCBI Taxonomy" id="10090"/>
    <lineage>
        <taxon>Eukaryota</taxon>
        <taxon>Metazoa</taxon>
        <taxon>Chordata</taxon>
        <taxon>Craniata</taxon>
        <taxon>Vertebrata</taxon>
        <taxon>Euteleostomi</taxon>
        <taxon>Mammalia</taxon>
        <taxon>Eutheria</taxon>
        <taxon>Euarchontoglires</taxon>
        <taxon>Glires</taxon>
        <taxon>Rodentia</taxon>
        <taxon>Myomorpha</taxon>
        <taxon>Muroidea</taxon>
        <taxon>Muridae</taxon>
        <taxon>Murinae</taxon>
        <taxon>Mus</taxon>
        <taxon>Mus</taxon>
    </lineage>
</organism>
<name>SNX4_MOUSE</name>
<evidence type="ECO:0000250" key="1">
    <source>
        <dbReference type="UniProtKB" id="O95219"/>
    </source>
</evidence>
<evidence type="ECO:0000250" key="2">
    <source>
        <dbReference type="UniProtKB" id="Q3UR97"/>
    </source>
</evidence>
<evidence type="ECO:0000250" key="3">
    <source>
        <dbReference type="UniProtKB" id="Q6P4T1"/>
    </source>
</evidence>
<evidence type="ECO:0000250" key="4">
    <source>
        <dbReference type="UniProtKB" id="Q96L94"/>
    </source>
</evidence>
<evidence type="ECO:0000255" key="5">
    <source>
        <dbReference type="PROSITE-ProRule" id="PRU00147"/>
    </source>
</evidence>
<evidence type="ECO:0000256" key="6">
    <source>
        <dbReference type="SAM" id="MobiDB-lite"/>
    </source>
</evidence>
<evidence type="ECO:0000269" key="7">
    <source>
    </source>
</evidence>
<evidence type="ECO:0000303" key="8">
    <source>
    </source>
</evidence>
<evidence type="ECO:0000305" key="9"/>
<evidence type="ECO:0000312" key="10">
    <source>
        <dbReference type="MGI" id="MGI:1916400"/>
    </source>
</evidence>
<proteinExistence type="evidence at protein level"/>
<keyword id="KW-0007">Acetylation</keyword>
<keyword id="KW-0967">Endosome</keyword>
<keyword id="KW-0446">Lipid-binding</keyword>
<keyword id="KW-0472">Membrane</keyword>
<keyword id="KW-0653">Protein transport</keyword>
<keyword id="KW-1185">Reference proteome</keyword>
<keyword id="KW-0813">Transport</keyword>
<feature type="chain" id="PRO_0000236197" description="Sorting nexin-4">
    <location>
        <begin position="1"/>
        <end position="450"/>
    </location>
</feature>
<feature type="domain" description="PX" evidence="5">
    <location>
        <begin position="61"/>
        <end position="187"/>
    </location>
</feature>
<feature type="region of interest" description="Disordered" evidence="6">
    <location>
        <begin position="1"/>
        <end position="46"/>
    </location>
</feature>
<feature type="compositionally biased region" description="Low complexity" evidence="6">
    <location>
        <begin position="11"/>
        <end position="20"/>
    </location>
</feature>
<feature type="binding site" evidence="2">
    <location>
        <position position="106"/>
    </location>
    <ligand>
        <name>a 1,2-diacyl-sn-glycero-3-phospho-(1D-myo-inositol-3-phosphate)</name>
        <dbReference type="ChEBI" id="CHEBI:58088"/>
    </ligand>
</feature>
<feature type="binding site" evidence="4">
    <location>
        <position position="108"/>
    </location>
    <ligand>
        <name>a 1,2-diacyl-sn-glycero-3-phospho-(1D-myo-inositol-3-phosphate)</name>
        <dbReference type="ChEBI" id="CHEBI:58088"/>
    </ligand>
</feature>
<feature type="binding site" evidence="4">
    <location>
        <position position="132"/>
    </location>
    <ligand>
        <name>a 1,2-diacyl-sn-glycero-3-phospho-(1D-myo-inositol-3-phosphate)</name>
        <dbReference type="ChEBI" id="CHEBI:58088"/>
    </ligand>
</feature>
<feature type="binding site" evidence="3">
    <location>
        <position position="154"/>
    </location>
    <ligand>
        <name>a 1,2-diacyl-sn-glycero-3-phospho-(1D-myo-inositol-3-phosphate)</name>
        <dbReference type="ChEBI" id="CHEBI:58088"/>
    </ligand>
</feature>
<feature type="modified residue" description="N-acetylmethionine" evidence="1">
    <location>
        <position position="1"/>
    </location>
</feature>
<reference key="1">
    <citation type="journal article" date="2005" name="Science">
        <title>The transcriptional landscape of the mammalian genome.</title>
        <authorList>
            <person name="Carninci P."/>
            <person name="Kasukawa T."/>
            <person name="Katayama S."/>
            <person name="Gough J."/>
            <person name="Frith M.C."/>
            <person name="Maeda N."/>
            <person name="Oyama R."/>
            <person name="Ravasi T."/>
            <person name="Lenhard B."/>
            <person name="Wells C."/>
            <person name="Kodzius R."/>
            <person name="Shimokawa K."/>
            <person name="Bajic V.B."/>
            <person name="Brenner S.E."/>
            <person name="Batalov S."/>
            <person name="Forrest A.R."/>
            <person name="Zavolan M."/>
            <person name="Davis M.J."/>
            <person name="Wilming L.G."/>
            <person name="Aidinis V."/>
            <person name="Allen J.E."/>
            <person name="Ambesi-Impiombato A."/>
            <person name="Apweiler R."/>
            <person name="Aturaliya R.N."/>
            <person name="Bailey T.L."/>
            <person name="Bansal M."/>
            <person name="Baxter L."/>
            <person name="Beisel K.W."/>
            <person name="Bersano T."/>
            <person name="Bono H."/>
            <person name="Chalk A.M."/>
            <person name="Chiu K.P."/>
            <person name="Choudhary V."/>
            <person name="Christoffels A."/>
            <person name="Clutterbuck D.R."/>
            <person name="Crowe M.L."/>
            <person name="Dalla E."/>
            <person name="Dalrymple B.P."/>
            <person name="de Bono B."/>
            <person name="Della Gatta G."/>
            <person name="di Bernardo D."/>
            <person name="Down T."/>
            <person name="Engstrom P."/>
            <person name="Fagiolini M."/>
            <person name="Faulkner G."/>
            <person name="Fletcher C.F."/>
            <person name="Fukushima T."/>
            <person name="Furuno M."/>
            <person name="Futaki S."/>
            <person name="Gariboldi M."/>
            <person name="Georgii-Hemming P."/>
            <person name="Gingeras T.R."/>
            <person name="Gojobori T."/>
            <person name="Green R.E."/>
            <person name="Gustincich S."/>
            <person name="Harbers M."/>
            <person name="Hayashi Y."/>
            <person name="Hensch T.K."/>
            <person name="Hirokawa N."/>
            <person name="Hill D."/>
            <person name="Huminiecki L."/>
            <person name="Iacono M."/>
            <person name="Ikeo K."/>
            <person name="Iwama A."/>
            <person name="Ishikawa T."/>
            <person name="Jakt M."/>
            <person name="Kanapin A."/>
            <person name="Katoh M."/>
            <person name="Kawasawa Y."/>
            <person name="Kelso J."/>
            <person name="Kitamura H."/>
            <person name="Kitano H."/>
            <person name="Kollias G."/>
            <person name="Krishnan S.P."/>
            <person name="Kruger A."/>
            <person name="Kummerfeld S.K."/>
            <person name="Kurochkin I.V."/>
            <person name="Lareau L.F."/>
            <person name="Lazarevic D."/>
            <person name="Lipovich L."/>
            <person name="Liu J."/>
            <person name="Liuni S."/>
            <person name="McWilliam S."/>
            <person name="Madan Babu M."/>
            <person name="Madera M."/>
            <person name="Marchionni L."/>
            <person name="Matsuda H."/>
            <person name="Matsuzawa S."/>
            <person name="Miki H."/>
            <person name="Mignone F."/>
            <person name="Miyake S."/>
            <person name="Morris K."/>
            <person name="Mottagui-Tabar S."/>
            <person name="Mulder N."/>
            <person name="Nakano N."/>
            <person name="Nakauchi H."/>
            <person name="Ng P."/>
            <person name="Nilsson R."/>
            <person name="Nishiguchi S."/>
            <person name="Nishikawa S."/>
            <person name="Nori F."/>
            <person name="Ohara O."/>
            <person name="Okazaki Y."/>
            <person name="Orlando V."/>
            <person name="Pang K.C."/>
            <person name="Pavan W.J."/>
            <person name="Pavesi G."/>
            <person name="Pesole G."/>
            <person name="Petrovsky N."/>
            <person name="Piazza S."/>
            <person name="Reed J."/>
            <person name="Reid J.F."/>
            <person name="Ring B.Z."/>
            <person name="Ringwald M."/>
            <person name="Rost B."/>
            <person name="Ruan Y."/>
            <person name="Salzberg S.L."/>
            <person name="Sandelin A."/>
            <person name="Schneider C."/>
            <person name="Schoenbach C."/>
            <person name="Sekiguchi K."/>
            <person name="Semple C.A."/>
            <person name="Seno S."/>
            <person name="Sessa L."/>
            <person name="Sheng Y."/>
            <person name="Shibata Y."/>
            <person name="Shimada H."/>
            <person name="Shimada K."/>
            <person name="Silva D."/>
            <person name="Sinclair B."/>
            <person name="Sperling S."/>
            <person name="Stupka E."/>
            <person name="Sugiura K."/>
            <person name="Sultana R."/>
            <person name="Takenaka Y."/>
            <person name="Taki K."/>
            <person name="Tammoja K."/>
            <person name="Tan S.L."/>
            <person name="Tang S."/>
            <person name="Taylor M.S."/>
            <person name="Tegner J."/>
            <person name="Teichmann S.A."/>
            <person name="Ueda H.R."/>
            <person name="van Nimwegen E."/>
            <person name="Verardo R."/>
            <person name="Wei C.L."/>
            <person name="Yagi K."/>
            <person name="Yamanishi H."/>
            <person name="Zabarovsky E."/>
            <person name="Zhu S."/>
            <person name="Zimmer A."/>
            <person name="Hide W."/>
            <person name="Bult C."/>
            <person name="Grimmond S.M."/>
            <person name="Teasdale R.D."/>
            <person name="Liu E.T."/>
            <person name="Brusic V."/>
            <person name="Quackenbush J."/>
            <person name="Wahlestedt C."/>
            <person name="Mattick J.S."/>
            <person name="Hume D.A."/>
            <person name="Kai C."/>
            <person name="Sasaki D."/>
            <person name="Tomaru Y."/>
            <person name="Fukuda S."/>
            <person name="Kanamori-Katayama M."/>
            <person name="Suzuki M."/>
            <person name="Aoki J."/>
            <person name="Arakawa T."/>
            <person name="Iida J."/>
            <person name="Imamura K."/>
            <person name="Itoh M."/>
            <person name="Kato T."/>
            <person name="Kawaji H."/>
            <person name="Kawagashira N."/>
            <person name="Kawashima T."/>
            <person name="Kojima M."/>
            <person name="Kondo S."/>
            <person name="Konno H."/>
            <person name="Nakano K."/>
            <person name="Ninomiya N."/>
            <person name="Nishio T."/>
            <person name="Okada M."/>
            <person name="Plessy C."/>
            <person name="Shibata K."/>
            <person name="Shiraki T."/>
            <person name="Suzuki S."/>
            <person name="Tagami M."/>
            <person name="Waki K."/>
            <person name="Watahiki A."/>
            <person name="Okamura-Oho Y."/>
            <person name="Suzuki H."/>
            <person name="Kawai J."/>
            <person name="Hayashizaki Y."/>
        </authorList>
    </citation>
    <scope>NUCLEOTIDE SEQUENCE [LARGE SCALE MRNA]</scope>
    <source>
        <strain>C57BL/6J</strain>
    </source>
</reference>
<reference key="2">
    <citation type="journal article" date="2004" name="Genome Res.">
        <title>The status, quality, and expansion of the NIH full-length cDNA project: the Mammalian Gene Collection (MGC).</title>
        <authorList>
            <consortium name="The MGC Project Team"/>
        </authorList>
    </citation>
    <scope>NUCLEOTIDE SEQUENCE [LARGE SCALE MRNA]</scope>
    <source>
        <strain>Czech II</strain>
        <tissue>Mammary tumor</tissue>
    </source>
</reference>
<reference key="3">
    <citation type="journal article" date="2003" name="J. Cell Sci.">
        <title>Sorting nexin 4 and amphiphysin 2, a new partnership between endocytosis and intracellular trafficking.</title>
        <authorList>
            <person name="Leprince C."/>
            <person name="Le Scolan E."/>
            <person name="Meunier B."/>
            <person name="Fraisier V."/>
            <person name="Brandon N."/>
            <person name="De Gunzburg J."/>
            <person name="Camonis J."/>
        </authorList>
    </citation>
    <scope>INTERACTION WITH BIN1</scope>
</reference>
<reference key="4">
    <citation type="journal article" date="2010" name="Cell">
        <title>A tissue-specific atlas of mouse protein phosphorylation and expression.</title>
        <authorList>
            <person name="Huttlin E.L."/>
            <person name="Jedrychowski M.P."/>
            <person name="Elias J.E."/>
            <person name="Goswami T."/>
            <person name="Rad R."/>
            <person name="Beausoleil S.A."/>
            <person name="Villen J."/>
            <person name="Haas W."/>
            <person name="Sowa M.E."/>
            <person name="Gygi S.P."/>
        </authorList>
    </citation>
    <scope>IDENTIFICATION BY MASS SPECTROMETRY [LARGE SCALE ANALYSIS]</scope>
    <source>
        <tissue>Brain</tissue>
        <tissue>Brown adipose tissue</tissue>
        <tissue>Kidney</tissue>
        <tissue>Liver</tissue>
        <tissue>Lung</tissue>
        <tissue>Spleen</tissue>
        <tissue>Testis</tissue>
    </source>
</reference>
<protein>
    <recommendedName>
        <fullName evidence="8">Sorting nexin-4</fullName>
    </recommendedName>
</protein>